<evidence type="ECO:0000255" key="1">
    <source>
        <dbReference type="HAMAP-Rule" id="MF_00158"/>
    </source>
</evidence>
<reference key="1">
    <citation type="submission" date="2006-03" db="EMBL/GenBank/DDBJ databases">
        <title>Complete sequence of Methylobacillus flagellatus KT.</title>
        <authorList>
            <consortium name="US DOE Joint Genome Institute"/>
            <person name="Copeland A."/>
            <person name="Lucas S."/>
            <person name="Lapidus A."/>
            <person name="Barry K."/>
            <person name="Detter J.C."/>
            <person name="Glavina del Rio T."/>
            <person name="Hammon N."/>
            <person name="Israni S."/>
            <person name="Dalin E."/>
            <person name="Tice H."/>
            <person name="Pitluck S."/>
            <person name="Brettin T."/>
            <person name="Bruce D."/>
            <person name="Han C."/>
            <person name="Tapia R."/>
            <person name="Saunders E."/>
            <person name="Gilna P."/>
            <person name="Schmutz J."/>
            <person name="Larimer F."/>
            <person name="Land M."/>
            <person name="Kyrpides N."/>
            <person name="Anderson I."/>
            <person name="Richardson P."/>
        </authorList>
    </citation>
    <scope>NUCLEOTIDE SEQUENCE [LARGE SCALE GENOMIC DNA]</scope>
    <source>
        <strain>ATCC 51484 / DSM 6875 / VKM B-1610 / KT</strain>
    </source>
</reference>
<accession>Q1H3S1</accession>
<feature type="chain" id="PRO_0000305483" description="Pantothenate synthetase">
    <location>
        <begin position="1"/>
        <end position="278"/>
    </location>
</feature>
<feature type="active site" description="Proton donor" evidence="1">
    <location>
        <position position="35"/>
    </location>
</feature>
<feature type="binding site" evidence="1">
    <location>
        <begin position="28"/>
        <end position="35"/>
    </location>
    <ligand>
        <name>ATP</name>
        <dbReference type="ChEBI" id="CHEBI:30616"/>
    </ligand>
</feature>
<feature type="binding site" evidence="1">
    <location>
        <position position="59"/>
    </location>
    <ligand>
        <name>(R)-pantoate</name>
        <dbReference type="ChEBI" id="CHEBI:15980"/>
    </ligand>
</feature>
<feature type="binding site" evidence="1">
    <location>
        <position position="59"/>
    </location>
    <ligand>
        <name>beta-alanine</name>
        <dbReference type="ChEBI" id="CHEBI:57966"/>
    </ligand>
</feature>
<feature type="binding site" evidence="1">
    <location>
        <begin position="145"/>
        <end position="148"/>
    </location>
    <ligand>
        <name>ATP</name>
        <dbReference type="ChEBI" id="CHEBI:30616"/>
    </ligand>
</feature>
<feature type="binding site" evidence="1">
    <location>
        <position position="151"/>
    </location>
    <ligand>
        <name>(R)-pantoate</name>
        <dbReference type="ChEBI" id="CHEBI:15980"/>
    </ligand>
</feature>
<feature type="binding site" evidence="1">
    <location>
        <begin position="182"/>
        <end position="185"/>
    </location>
    <ligand>
        <name>ATP</name>
        <dbReference type="ChEBI" id="CHEBI:30616"/>
    </ligand>
</feature>
<sequence length="278" mass="30727">MTLQIIPEISSLRARLAGENSIALVPTMGNLHAGHIHLVELARQRAGCVVTSIFVNPLQFGANEDLDNYPRTLAEDCAKLQAAGADIVFTPSVQEMYPTTQTMRITPPPIANELCGAARPGHFDGVATVVMKLFNIVQPHIAVFGKKDFQQLFIIRELVRQFNLPIDIIAGETQREHTGLALSSRNGYLNEGQKLEAQRLYRTLKLIVDNVQQGNRDYPAIEAQSSQYLTQLGWIVDYISIRSSTTLLPASLDDHNLVVLAAARQGNTRLIDNIEFSV</sequence>
<keyword id="KW-0067">ATP-binding</keyword>
<keyword id="KW-0963">Cytoplasm</keyword>
<keyword id="KW-0436">Ligase</keyword>
<keyword id="KW-0547">Nucleotide-binding</keyword>
<keyword id="KW-0566">Pantothenate biosynthesis</keyword>
<keyword id="KW-1185">Reference proteome</keyword>
<proteinExistence type="inferred from homology"/>
<name>PANC_METFK</name>
<comment type="function">
    <text evidence="1">Catalyzes the condensation of pantoate with beta-alanine in an ATP-dependent reaction via a pantoyl-adenylate intermediate.</text>
</comment>
<comment type="catalytic activity">
    <reaction evidence="1">
        <text>(R)-pantoate + beta-alanine + ATP = (R)-pantothenate + AMP + diphosphate + H(+)</text>
        <dbReference type="Rhea" id="RHEA:10912"/>
        <dbReference type="ChEBI" id="CHEBI:15378"/>
        <dbReference type="ChEBI" id="CHEBI:15980"/>
        <dbReference type="ChEBI" id="CHEBI:29032"/>
        <dbReference type="ChEBI" id="CHEBI:30616"/>
        <dbReference type="ChEBI" id="CHEBI:33019"/>
        <dbReference type="ChEBI" id="CHEBI:57966"/>
        <dbReference type="ChEBI" id="CHEBI:456215"/>
        <dbReference type="EC" id="6.3.2.1"/>
    </reaction>
</comment>
<comment type="pathway">
    <text evidence="1">Cofactor biosynthesis; (R)-pantothenate biosynthesis; (R)-pantothenate from (R)-pantoate and beta-alanine: step 1/1.</text>
</comment>
<comment type="subunit">
    <text evidence="1">Homodimer.</text>
</comment>
<comment type="subcellular location">
    <subcellularLocation>
        <location evidence="1">Cytoplasm</location>
    </subcellularLocation>
</comment>
<comment type="miscellaneous">
    <text evidence="1">The reaction proceeds by a bi uni uni bi ping pong mechanism.</text>
</comment>
<comment type="similarity">
    <text evidence="1">Belongs to the pantothenate synthetase family.</text>
</comment>
<protein>
    <recommendedName>
        <fullName evidence="1">Pantothenate synthetase</fullName>
        <shortName evidence="1">PS</shortName>
        <ecNumber evidence="1">6.3.2.1</ecNumber>
    </recommendedName>
    <alternativeName>
        <fullName evidence="1">Pantoate--beta-alanine ligase</fullName>
    </alternativeName>
    <alternativeName>
        <fullName evidence="1">Pantoate-activating enzyme</fullName>
    </alternativeName>
</protein>
<gene>
    <name evidence="1" type="primary">panC</name>
    <name type="ordered locus">Mfla_0596</name>
</gene>
<dbReference type="EC" id="6.3.2.1" evidence="1"/>
<dbReference type="EMBL" id="CP000284">
    <property type="protein sequence ID" value="ABE48866.1"/>
    <property type="molecule type" value="Genomic_DNA"/>
</dbReference>
<dbReference type="RefSeq" id="WP_011478963.1">
    <property type="nucleotide sequence ID" value="NC_007947.1"/>
</dbReference>
<dbReference type="SMR" id="Q1H3S1"/>
<dbReference type="STRING" id="265072.Mfla_0596"/>
<dbReference type="KEGG" id="mfa:Mfla_0596"/>
<dbReference type="eggNOG" id="COG0414">
    <property type="taxonomic scope" value="Bacteria"/>
</dbReference>
<dbReference type="HOGENOM" id="CLU_047148_0_0_4"/>
<dbReference type="OrthoDB" id="9773087at2"/>
<dbReference type="UniPathway" id="UPA00028">
    <property type="reaction ID" value="UER00005"/>
</dbReference>
<dbReference type="Proteomes" id="UP000002440">
    <property type="component" value="Chromosome"/>
</dbReference>
<dbReference type="GO" id="GO:0005829">
    <property type="term" value="C:cytosol"/>
    <property type="evidence" value="ECO:0007669"/>
    <property type="project" value="TreeGrafter"/>
</dbReference>
<dbReference type="GO" id="GO:0005524">
    <property type="term" value="F:ATP binding"/>
    <property type="evidence" value="ECO:0007669"/>
    <property type="project" value="UniProtKB-KW"/>
</dbReference>
<dbReference type="GO" id="GO:0004592">
    <property type="term" value="F:pantoate-beta-alanine ligase activity"/>
    <property type="evidence" value="ECO:0007669"/>
    <property type="project" value="UniProtKB-UniRule"/>
</dbReference>
<dbReference type="GO" id="GO:0015940">
    <property type="term" value="P:pantothenate biosynthetic process"/>
    <property type="evidence" value="ECO:0007669"/>
    <property type="project" value="UniProtKB-UniRule"/>
</dbReference>
<dbReference type="CDD" id="cd00560">
    <property type="entry name" value="PanC"/>
    <property type="match status" value="1"/>
</dbReference>
<dbReference type="FunFam" id="3.40.50.620:FF:000114">
    <property type="entry name" value="Pantothenate synthetase"/>
    <property type="match status" value="1"/>
</dbReference>
<dbReference type="Gene3D" id="3.40.50.620">
    <property type="entry name" value="HUPs"/>
    <property type="match status" value="1"/>
</dbReference>
<dbReference type="Gene3D" id="3.30.1300.10">
    <property type="entry name" value="Pantoate-beta-alanine ligase, C-terminal domain"/>
    <property type="match status" value="1"/>
</dbReference>
<dbReference type="HAMAP" id="MF_00158">
    <property type="entry name" value="PanC"/>
    <property type="match status" value="1"/>
</dbReference>
<dbReference type="InterPro" id="IPR003721">
    <property type="entry name" value="Pantoate_ligase"/>
</dbReference>
<dbReference type="InterPro" id="IPR042176">
    <property type="entry name" value="Pantoate_ligase_C"/>
</dbReference>
<dbReference type="InterPro" id="IPR014729">
    <property type="entry name" value="Rossmann-like_a/b/a_fold"/>
</dbReference>
<dbReference type="NCBIfam" id="TIGR00018">
    <property type="entry name" value="panC"/>
    <property type="match status" value="1"/>
</dbReference>
<dbReference type="PANTHER" id="PTHR21299">
    <property type="entry name" value="CYTIDYLATE KINASE/PANTOATE-BETA-ALANINE LIGASE"/>
    <property type="match status" value="1"/>
</dbReference>
<dbReference type="PANTHER" id="PTHR21299:SF1">
    <property type="entry name" value="PANTOATE--BETA-ALANINE LIGASE"/>
    <property type="match status" value="1"/>
</dbReference>
<dbReference type="Pfam" id="PF02569">
    <property type="entry name" value="Pantoate_ligase"/>
    <property type="match status" value="1"/>
</dbReference>
<dbReference type="SUPFAM" id="SSF52374">
    <property type="entry name" value="Nucleotidylyl transferase"/>
    <property type="match status" value="1"/>
</dbReference>
<organism>
    <name type="scientific">Methylobacillus flagellatus (strain ATCC 51484 / DSM 6875 / VKM B-1610 / KT)</name>
    <dbReference type="NCBI Taxonomy" id="265072"/>
    <lineage>
        <taxon>Bacteria</taxon>
        <taxon>Pseudomonadati</taxon>
        <taxon>Pseudomonadota</taxon>
        <taxon>Betaproteobacteria</taxon>
        <taxon>Nitrosomonadales</taxon>
        <taxon>Methylophilaceae</taxon>
        <taxon>Methylobacillus</taxon>
    </lineage>
</organism>